<name>SY111_ORYSJ</name>
<reference key="1">
    <citation type="journal article" date="2003" name="Proc. Natl. Acad. Sci. U.S.A.">
        <title>A complex history of rearrangement in an orthologous region of the maize, sorghum, and rice genomes.</title>
        <authorList>
            <person name="Ilic K."/>
            <person name="SanMiguel P.J."/>
            <person name="Bennetzen J.L."/>
        </authorList>
    </citation>
    <scope>NUCLEOTIDE SEQUENCE [GENOMIC DNA]</scope>
</reference>
<reference key="2">
    <citation type="journal article" date="2019" name="Plant Physiol.">
        <title>OsSYP121 accumulates at fungal penetration sites and mediates host resistance to rice blast.</title>
        <authorList>
            <person name="Cao W.L."/>
            <person name="Yu Y."/>
            <person name="Li M.Y."/>
            <person name="Luo J."/>
            <person name="Wang R.S."/>
            <person name="Tang H.J."/>
            <person name="Huang J."/>
            <person name="Wang J.F."/>
            <person name="Zhang H.S."/>
            <person name="Bao Y.M."/>
        </authorList>
    </citation>
    <scope>NUCLEOTIDE SEQUENCE [MRNA]</scope>
    <scope>SUBCELLULAR LOCATION</scope>
    <scope>TISSUE SPECIFICITY</scope>
</reference>
<reference key="3">
    <citation type="journal article" date="2005" name="Genome Res.">
        <title>Sequence, annotation, and analysis of synteny between rice chromosome 3 and diverged grass species.</title>
        <authorList>
            <consortium name="The rice chromosome 3 sequencing consortium"/>
            <person name="Buell C.R."/>
            <person name="Yuan Q."/>
            <person name="Ouyang S."/>
            <person name="Liu J."/>
            <person name="Zhu W."/>
            <person name="Wang A."/>
            <person name="Maiti R."/>
            <person name="Haas B."/>
            <person name="Wortman J."/>
            <person name="Pertea M."/>
            <person name="Jones K.M."/>
            <person name="Kim M."/>
            <person name="Overton L."/>
            <person name="Tsitrin T."/>
            <person name="Fadrosh D."/>
            <person name="Bera J."/>
            <person name="Weaver B."/>
            <person name="Jin S."/>
            <person name="Johri S."/>
            <person name="Reardon M."/>
            <person name="Webb K."/>
            <person name="Hill J."/>
            <person name="Moffat K."/>
            <person name="Tallon L."/>
            <person name="Van Aken S."/>
            <person name="Lewis M."/>
            <person name="Utterback T."/>
            <person name="Feldblyum T."/>
            <person name="Zismann V."/>
            <person name="Iobst S."/>
            <person name="Hsiao J."/>
            <person name="de Vazeille A.R."/>
            <person name="Salzberg S.L."/>
            <person name="White O."/>
            <person name="Fraser C.M."/>
            <person name="Yu Y."/>
            <person name="Kim H."/>
            <person name="Rambo T."/>
            <person name="Currie J."/>
            <person name="Collura K."/>
            <person name="Kernodle-Thompson S."/>
            <person name="Wei F."/>
            <person name="Kudrna K."/>
            <person name="Ammiraju J.S.S."/>
            <person name="Luo M."/>
            <person name="Goicoechea J.L."/>
            <person name="Wing R.A."/>
            <person name="Henry D."/>
            <person name="Oates R."/>
            <person name="Palmer M."/>
            <person name="Pries G."/>
            <person name="Saski C."/>
            <person name="Simmons J."/>
            <person name="Soderlund C."/>
            <person name="Nelson W."/>
            <person name="de la Bastide M."/>
            <person name="Spiegel L."/>
            <person name="Nascimento L."/>
            <person name="Huang E."/>
            <person name="Preston R."/>
            <person name="Zutavern T."/>
            <person name="Palmer L."/>
            <person name="O'Shaughnessy A."/>
            <person name="Dike S."/>
            <person name="McCombie W.R."/>
            <person name="Minx P."/>
            <person name="Cordum H."/>
            <person name="Wilson R."/>
            <person name="Jin W."/>
            <person name="Lee H.R."/>
            <person name="Jiang J."/>
            <person name="Jackson S."/>
        </authorList>
    </citation>
    <scope>NUCLEOTIDE SEQUENCE [LARGE SCALE GENOMIC DNA]</scope>
    <source>
        <strain>cv. Nipponbare</strain>
    </source>
</reference>
<reference key="4">
    <citation type="journal article" date="2005" name="Nature">
        <title>The map-based sequence of the rice genome.</title>
        <authorList>
            <consortium name="International rice genome sequencing project (IRGSP)"/>
        </authorList>
    </citation>
    <scope>NUCLEOTIDE SEQUENCE [LARGE SCALE GENOMIC DNA]</scope>
    <source>
        <strain>cv. Nipponbare</strain>
    </source>
</reference>
<reference key="5">
    <citation type="journal article" date="2008" name="Nucleic Acids Res.">
        <title>The rice annotation project database (RAP-DB): 2008 update.</title>
        <authorList>
            <consortium name="The rice annotation project (RAP)"/>
        </authorList>
    </citation>
    <scope>GENOME REANNOTATION</scope>
    <source>
        <strain>cv. Nipponbare</strain>
    </source>
</reference>
<reference key="6">
    <citation type="journal article" date="2013" name="Rice">
        <title>Improvement of the Oryza sativa Nipponbare reference genome using next generation sequence and optical map data.</title>
        <authorList>
            <person name="Kawahara Y."/>
            <person name="de la Bastide M."/>
            <person name="Hamilton J.P."/>
            <person name="Kanamori H."/>
            <person name="McCombie W.R."/>
            <person name="Ouyang S."/>
            <person name="Schwartz D.C."/>
            <person name="Tanaka T."/>
            <person name="Wu J."/>
            <person name="Zhou S."/>
            <person name="Childs K.L."/>
            <person name="Davidson R.M."/>
            <person name="Lin H."/>
            <person name="Quesada-Ocampo L."/>
            <person name="Vaillancourt B."/>
            <person name="Sakai H."/>
            <person name="Lee S.S."/>
            <person name="Kim J."/>
            <person name="Numa H."/>
            <person name="Itoh T."/>
            <person name="Buell C.R."/>
            <person name="Matsumoto T."/>
        </authorList>
    </citation>
    <scope>GENOME REANNOTATION</scope>
    <source>
        <strain>cv. Nipponbare</strain>
    </source>
</reference>
<gene>
    <name evidence="5" type="primary">SYP111</name>
    <name evidence="9" type="ordered locus">Os03g0736500</name>
    <name evidence="8" type="ordered locus">LOC_Os03g52650</name>
    <name evidence="7" type="ORF">OSJNBb0016H12.15</name>
</gene>
<comment type="function">
    <text evidence="1">Vesicle trafficking protein that functions in the secretory pathway.</text>
</comment>
<comment type="subcellular location">
    <subcellularLocation>
        <location evidence="4">Cell membrane</location>
        <topology evidence="2">Single-pass type IV membrane protein</topology>
    </subcellularLocation>
    <subcellularLocation>
        <location>Cytoplasm</location>
    </subcellularLocation>
    <text evidence="4">Localizes at the plasma membrane and in the cytoplasm.</text>
</comment>
<comment type="tissue specificity">
    <text evidence="4">Expressed in roots and panicles.</text>
</comment>
<comment type="similarity">
    <text evidence="6">Belongs to the syntaxin family.</text>
</comment>
<sequence length="311" mass="35012">MNDLMTKSFMSYVDLKKAAMKDLEAGGDGVELPEVGVTDERLKGFFQETEAVEEEMAAIRDALARLNAANEEGKSLHQPDALRALRGRVNADIIAVLRRARDIRARLEAMDRANAAQRRLSAGCREGTPLDRTRTALTAALRKKLKDLMLDFQALRQRIMSEYKDTVERRYYTLTGEVPEEEVIERIISEGRSEELLCAAVAEHGKGAVLATVHEIQDRHDAAREVERSLLELHQVFLDMAVVVESQGEQLDDIERHVNSATTYVQGGNKELRKAREHQRSSRKWLCIGIIILLLLVLLVIVPIATSFKRS</sequence>
<proteinExistence type="evidence at transcript level"/>
<dbReference type="EMBL" id="AY387483">
    <property type="protein sequence ID" value="AAR07084.1"/>
    <property type="molecule type" value="Genomic_DNA"/>
</dbReference>
<dbReference type="EMBL" id="DQ231253">
    <property type="protein sequence ID" value="ABB22783.1"/>
    <property type="molecule type" value="mRNA"/>
</dbReference>
<dbReference type="EMBL" id="AC118133">
    <property type="protein sequence ID" value="AAP03411.1"/>
    <property type="molecule type" value="Genomic_DNA"/>
</dbReference>
<dbReference type="EMBL" id="DP000009">
    <property type="protein sequence ID" value="ABF98751.1"/>
    <property type="molecule type" value="Genomic_DNA"/>
</dbReference>
<dbReference type="EMBL" id="AP014959">
    <property type="protein sequence ID" value="BAS86268.1"/>
    <property type="molecule type" value="Genomic_DNA"/>
</dbReference>
<dbReference type="SMR" id="Q84R43"/>
<dbReference type="FunCoup" id="Q84R43">
    <property type="interactions" value="931"/>
</dbReference>
<dbReference type="STRING" id="39947.Q84R43"/>
<dbReference type="PaxDb" id="39947-Q84R43"/>
<dbReference type="EnsemblPlants" id="Os03t0736500-01">
    <property type="protein sequence ID" value="Os03t0736500-01"/>
    <property type="gene ID" value="Os03g0736500"/>
</dbReference>
<dbReference type="GeneID" id="107276918"/>
<dbReference type="Gramene" id="Os03t0736500-01">
    <property type="protein sequence ID" value="Os03t0736500-01"/>
    <property type="gene ID" value="Os03g0736500"/>
</dbReference>
<dbReference type="KEGG" id="osa:107276918"/>
<dbReference type="eggNOG" id="KOG0810">
    <property type="taxonomic scope" value="Eukaryota"/>
</dbReference>
<dbReference type="HOGENOM" id="CLU_042423_1_1_1"/>
<dbReference type="InParanoid" id="Q84R43"/>
<dbReference type="OMA" id="VLHASHY"/>
<dbReference type="OrthoDB" id="10255013at2759"/>
<dbReference type="Proteomes" id="UP000000763">
    <property type="component" value="Chromosome 3"/>
</dbReference>
<dbReference type="Proteomes" id="UP000059680">
    <property type="component" value="Chromosome 3"/>
</dbReference>
<dbReference type="GO" id="GO:0009504">
    <property type="term" value="C:cell plate"/>
    <property type="evidence" value="ECO:0007669"/>
    <property type="project" value="EnsemblPlants"/>
</dbReference>
<dbReference type="GO" id="GO:0012505">
    <property type="term" value="C:endomembrane system"/>
    <property type="evidence" value="ECO:0000318"/>
    <property type="project" value="GO_Central"/>
</dbReference>
<dbReference type="GO" id="GO:0009524">
    <property type="term" value="C:phragmoplast"/>
    <property type="evidence" value="ECO:0007669"/>
    <property type="project" value="EnsemblPlants"/>
</dbReference>
<dbReference type="GO" id="GO:0005886">
    <property type="term" value="C:plasma membrane"/>
    <property type="evidence" value="ECO:0000318"/>
    <property type="project" value="GO_Central"/>
</dbReference>
<dbReference type="GO" id="GO:0031201">
    <property type="term" value="C:SNARE complex"/>
    <property type="evidence" value="ECO:0000318"/>
    <property type="project" value="GO_Central"/>
</dbReference>
<dbReference type="GO" id="GO:0005484">
    <property type="term" value="F:SNAP receptor activity"/>
    <property type="evidence" value="ECO:0000318"/>
    <property type="project" value="GO_Central"/>
</dbReference>
<dbReference type="GO" id="GO:0000149">
    <property type="term" value="F:SNARE binding"/>
    <property type="evidence" value="ECO:0000318"/>
    <property type="project" value="GO_Central"/>
</dbReference>
<dbReference type="GO" id="GO:0006887">
    <property type="term" value="P:exocytosis"/>
    <property type="evidence" value="ECO:0000318"/>
    <property type="project" value="GO_Central"/>
</dbReference>
<dbReference type="GO" id="GO:0006886">
    <property type="term" value="P:intracellular protein transport"/>
    <property type="evidence" value="ECO:0000318"/>
    <property type="project" value="GO_Central"/>
</dbReference>
<dbReference type="GO" id="GO:0048278">
    <property type="term" value="P:vesicle docking"/>
    <property type="evidence" value="ECO:0000318"/>
    <property type="project" value="GO_Central"/>
</dbReference>
<dbReference type="GO" id="GO:0006906">
    <property type="term" value="P:vesicle fusion"/>
    <property type="evidence" value="ECO:0000318"/>
    <property type="project" value="GO_Central"/>
</dbReference>
<dbReference type="CDD" id="cd15848">
    <property type="entry name" value="SNARE_syntaxin1-like"/>
    <property type="match status" value="1"/>
</dbReference>
<dbReference type="CDD" id="cd00179">
    <property type="entry name" value="SynN"/>
    <property type="match status" value="1"/>
</dbReference>
<dbReference type="FunFam" id="1.20.58.70:FF:000003">
    <property type="entry name" value="Qa-SNARE, Sso1/Syntaxin1-type, SYP12A-group"/>
    <property type="match status" value="1"/>
</dbReference>
<dbReference type="FunFam" id="1.20.5.110:FF:000008">
    <property type="entry name" value="Syntaxin 132"/>
    <property type="match status" value="1"/>
</dbReference>
<dbReference type="Gene3D" id="1.20.5.110">
    <property type="match status" value="1"/>
</dbReference>
<dbReference type="Gene3D" id="1.20.58.70">
    <property type="match status" value="1"/>
</dbReference>
<dbReference type="InterPro" id="IPR010989">
    <property type="entry name" value="SNARE"/>
</dbReference>
<dbReference type="InterPro" id="IPR045242">
    <property type="entry name" value="Syntaxin"/>
</dbReference>
<dbReference type="InterPro" id="IPR006012">
    <property type="entry name" value="Syntaxin/epimorphin_CS"/>
</dbReference>
<dbReference type="InterPro" id="IPR006011">
    <property type="entry name" value="Syntaxin_N"/>
</dbReference>
<dbReference type="InterPro" id="IPR000727">
    <property type="entry name" value="T_SNARE_dom"/>
</dbReference>
<dbReference type="PANTHER" id="PTHR19957">
    <property type="entry name" value="SYNTAXIN"/>
    <property type="match status" value="1"/>
</dbReference>
<dbReference type="PANTHER" id="PTHR19957:SF251">
    <property type="entry name" value="SYNTAXIN-RELATED PROTEIN KNOLLE"/>
    <property type="match status" value="1"/>
</dbReference>
<dbReference type="Pfam" id="PF05739">
    <property type="entry name" value="SNARE"/>
    <property type="match status" value="1"/>
</dbReference>
<dbReference type="Pfam" id="PF00804">
    <property type="entry name" value="Syntaxin"/>
    <property type="match status" value="1"/>
</dbReference>
<dbReference type="SMART" id="SM00503">
    <property type="entry name" value="SynN"/>
    <property type="match status" value="1"/>
</dbReference>
<dbReference type="SMART" id="SM00397">
    <property type="entry name" value="t_SNARE"/>
    <property type="match status" value="1"/>
</dbReference>
<dbReference type="SUPFAM" id="SSF47661">
    <property type="entry name" value="t-snare proteins"/>
    <property type="match status" value="1"/>
</dbReference>
<dbReference type="PROSITE" id="PS00914">
    <property type="entry name" value="SYNTAXIN"/>
    <property type="match status" value="1"/>
</dbReference>
<dbReference type="PROSITE" id="PS50192">
    <property type="entry name" value="T_SNARE"/>
    <property type="match status" value="1"/>
</dbReference>
<organism>
    <name type="scientific">Oryza sativa subsp. japonica</name>
    <name type="common">Rice</name>
    <dbReference type="NCBI Taxonomy" id="39947"/>
    <lineage>
        <taxon>Eukaryota</taxon>
        <taxon>Viridiplantae</taxon>
        <taxon>Streptophyta</taxon>
        <taxon>Embryophyta</taxon>
        <taxon>Tracheophyta</taxon>
        <taxon>Spermatophyta</taxon>
        <taxon>Magnoliopsida</taxon>
        <taxon>Liliopsida</taxon>
        <taxon>Poales</taxon>
        <taxon>Poaceae</taxon>
        <taxon>BOP clade</taxon>
        <taxon>Oryzoideae</taxon>
        <taxon>Oryzeae</taxon>
        <taxon>Oryzinae</taxon>
        <taxon>Oryza</taxon>
        <taxon>Oryza sativa</taxon>
    </lineage>
</organism>
<accession>Q84R43</accession>
<accession>A0A0P0W304</accession>
<feature type="chain" id="PRO_0000456758" description="Syntaxin-111">
    <location>
        <begin position="1"/>
        <end position="311"/>
    </location>
</feature>
<feature type="topological domain" description="Cytoplasmic" evidence="2">
    <location>
        <begin position="1"/>
        <end position="284"/>
    </location>
</feature>
<feature type="transmembrane region" description="Helical; Anchor for type IV membrane protein" evidence="2">
    <location>
        <begin position="285"/>
        <end position="305"/>
    </location>
</feature>
<feature type="topological domain" description="Vesicular" evidence="2">
    <location>
        <begin position="306"/>
        <end position="311"/>
    </location>
</feature>
<feature type="domain" description="t-SNARE coiled-coil homology" evidence="3">
    <location>
        <begin position="213"/>
        <end position="275"/>
    </location>
</feature>
<protein>
    <recommendedName>
        <fullName evidence="5">Syntaxin-111</fullName>
        <shortName evidence="5">OsSYP111</shortName>
    </recommendedName>
</protein>
<keyword id="KW-1003">Cell membrane</keyword>
<keyword id="KW-0963">Cytoplasm</keyword>
<keyword id="KW-0472">Membrane</keyword>
<keyword id="KW-0653">Protein transport</keyword>
<keyword id="KW-1185">Reference proteome</keyword>
<keyword id="KW-0812">Transmembrane</keyword>
<keyword id="KW-1133">Transmembrane helix</keyword>
<keyword id="KW-0813">Transport</keyword>
<evidence type="ECO:0000250" key="1">
    <source>
        <dbReference type="UniProtKB" id="Q6F3B4"/>
    </source>
</evidence>
<evidence type="ECO:0000255" key="2"/>
<evidence type="ECO:0000255" key="3">
    <source>
        <dbReference type="PROSITE-ProRule" id="PRU00202"/>
    </source>
</evidence>
<evidence type="ECO:0000269" key="4">
    <source>
    </source>
</evidence>
<evidence type="ECO:0000303" key="5">
    <source>
    </source>
</evidence>
<evidence type="ECO:0000305" key="6"/>
<evidence type="ECO:0000312" key="7">
    <source>
        <dbReference type="EMBL" id="AAP03411.1"/>
    </source>
</evidence>
<evidence type="ECO:0000312" key="8">
    <source>
        <dbReference type="EMBL" id="ABF98751.1"/>
    </source>
</evidence>
<evidence type="ECO:0000312" key="9">
    <source>
        <dbReference type="EMBL" id="BAS86268.1"/>
    </source>
</evidence>